<sequence>MILVLGVFKIEVEPMLKEMEVLEKGRLLKRYYQRGVVGRNEVVVSYGFIGKVEAALVTQAFLDRFNIDAVFLTGNAGGLEGVEVGDVVIGDSYVEYDFETALGDEGIIVSGSEDLEDKVIAYSNREIKTGLIASGDAFVTVKEKAEEIKRRTGALCVDMDSAAVAKVCYENEKKFLAIKTIVDICGRETEEEFRKNYERYGFLSNLILLDVLKKCVF</sequence>
<organism>
    <name type="scientific">Thermotoga maritima (strain ATCC 43589 / DSM 3109 / JCM 10099 / NBRC 100826 / MSB8)</name>
    <dbReference type="NCBI Taxonomy" id="243274"/>
    <lineage>
        <taxon>Bacteria</taxon>
        <taxon>Thermotogati</taxon>
        <taxon>Thermotogota</taxon>
        <taxon>Thermotogae</taxon>
        <taxon>Thermotogales</taxon>
        <taxon>Thermotogaceae</taxon>
        <taxon>Thermotoga</taxon>
    </lineage>
</organism>
<reference key="1">
    <citation type="journal article" date="1999" name="Nature">
        <title>Evidence for lateral gene transfer between Archaea and Bacteria from genome sequence of Thermotoga maritima.</title>
        <authorList>
            <person name="Nelson K.E."/>
            <person name="Clayton R.A."/>
            <person name="Gill S.R."/>
            <person name="Gwinn M.L."/>
            <person name="Dodson R.J."/>
            <person name="Haft D.H."/>
            <person name="Hickey E.K."/>
            <person name="Peterson J.D."/>
            <person name="Nelson W.C."/>
            <person name="Ketchum K.A."/>
            <person name="McDonald L.A."/>
            <person name="Utterback T.R."/>
            <person name="Malek J.A."/>
            <person name="Linher K.D."/>
            <person name="Garrett M.M."/>
            <person name="Stewart A.M."/>
            <person name="Cotton M.D."/>
            <person name="Pratt M.S."/>
            <person name="Phillips C.A."/>
            <person name="Richardson D.L."/>
            <person name="Heidelberg J.F."/>
            <person name="Sutton G.G."/>
            <person name="Fleischmann R.D."/>
            <person name="Eisen J.A."/>
            <person name="White O."/>
            <person name="Salzberg S.L."/>
            <person name="Smith H.O."/>
            <person name="Venter J.C."/>
            <person name="Fraser C.M."/>
        </authorList>
    </citation>
    <scope>NUCLEOTIDE SEQUENCE [LARGE SCALE GENOMIC DNA]</scope>
    <source>
        <strain>ATCC 43589 / DSM 3109 / JCM 10099 / NBRC 100826 / MSB8</strain>
    </source>
</reference>
<accession>Q9X0L3</accession>
<keyword id="KW-0028">Amino-acid biosynthesis</keyword>
<keyword id="KW-0378">Hydrolase</keyword>
<keyword id="KW-0486">Methionine biosynthesis</keyword>
<keyword id="KW-1185">Reference proteome</keyword>
<feature type="chain" id="PRO_0000164450" description="5'-methylthioadenosine/S-adenosylhomocysteine nucleosidase">
    <location>
        <begin position="1"/>
        <end position="217"/>
    </location>
</feature>
<feature type="active site" description="Proton acceptor" evidence="1">
    <location>
        <position position="11"/>
    </location>
</feature>
<feature type="active site" description="Proton donor" evidence="1">
    <location>
        <position position="183"/>
    </location>
</feature>
<feature type="binding site" evidence="1">
    <location>
        <position position="77"/>
    </location>
    <ligand>
        <name>substrate</name>
    </ligand>
</feature>
<feature type="binding site" evidence="1">
    <location>
        <position position="139"/>
    </location>
    <ligand>
        <name>substrate</name>
    </ligand>
</feature>
<feature type="binding site" evidence="1">
    <location>
        <begin position="159"/>
        <end position="160"/>
    </location>
    <ligand>
        <name>substrate</name>
    </ligand>
</feature>
<proteinExistence type="inferred from homology"/>
<comment type="function">
    <text evidence="1">Catalyzes the irreversible cleavage of the glycosidic bond in both 5'-methylthioadenosine (MTA) and S-adenosylhomocysteine (SAH/AdoHcy) to adenine and the corresponding thioribose, 5'-methylthioribose and S-ribosylhomocysteine, respectively. Also cleaves 5'-deoxyadenosine, a toxic by-product of radical S-adenosylmethionine (SAM) enzymes, into 5-deoxyribose and adenine.</text>
</comment>
<comment type="catalytic activity">
    <reaction evidence="1">
        <text>S-adenosyl-L-homocysteine + H2O = S-(5-deoxy-D-ribos-5-yl)-L-homocysteine + adenine</text>
        <dbReference type="Rhea" id="RHEA:17805"/>
        <dbReference type="ChEBI" id="CHEBI:15377"/>
        <dbReference type="ChEBI" id="CHEBI:16708"/>
        <dbReference type="ChEBI" id="CHEBI:57856"/>
        <dbReference type="ChEBI" id="CHEBI:58195"/>
        <dbReference type="EC" id="3.2.2.9"/>
    </reaction>
</comment>
<comment type="catalytic activity">
    <reaction evidence="1">
        <text>S-methyl-5'-thioadenosine + H2O = 5-(methylsulfanyl)-D-ribose + adenine</text>
        <dbReference type="Rhea" id="RHEA:13617"/>
        <dbReference type="ChEBI" id="CHEBI:15377"/>
        <dbReference type="ChEBI" id="CHEBI:16708"/>
        <dbReference type="ChEBI" id="CHEBI:17509"/>
        <dbReference type="ChEBI" id="CHEBI:78440"/>
        <dbReference type="EC" id="3.2.2.9"/>
    </reaction>
</comment>
<comment type="catalytic activity">
    <reaction evidence="1">
        <text>5'-deoxyadenosine + H2O = 5-deoxy-D-ribose + adenine</text>
        <dbReference type="Rhea" id="RHEA:29859"/>
        <dbReference type="ChEBI" id="CHEBI:15377"/>
        <dbReference type="ChEBI" id="CHEBI:16708"/>
        <dbReference type="ChEBI" id="CHEBI:17319"/>
        <dbReference type="ChEBI" id="CHEBI:149540"/>
        <dbReference type="EC" id="3.2.2.9"/>
    </reaction>
    <physiologicalReaction direction="left-to-right" evidence="1">
        <dbReference type="Rhea" id="RHEA:29860"/>
    </physiologicalReaction>
</comment>
<comment type="pathway">
    <text evidence="1">Amino-acid biosynthesis; L-methionine biosynthesis via salvage pathway; S-methyl-5-thio-alpha-D-ribose 1-phosphate from S-methyl-5'-thioadenosine (hydrolase route): step 1/2.</text>
</comment>
<comment type="similarity">
    <text evidence="2">Belongs to the PNP/UDP phosphorylase family. MtnN subfamily.</text>
</comment>
<dbReference type="EC" id="3.2.2.9" evidence="1"/>
<dbReference type="EMBL" id="AE000512">
    <property type="protein sequence ID" value="AAD36205.1"/>
    <property type="molecule type" value="Genomic_DNA"/>
</dbReference>
<dbReference type="PIR" id="F72293">
    <property type="entry name" value="F72293"/>
</dbReference>
<dbReference type="RefSeq" id="NP_228935.1">
    <property type="nucleotide sequence ID" value="NC_000853.1"/>
</dbReference>
<dbReference type="RefSeq" id="WP_004080281.1">
    <property type="nucleotide sequence ID" value="NC_000853.1"/>
</dbReference>
<dbReference type="SMR" id="Q9X0L3"/>
<dbReference type="FunCoup" id="Q9X0L3">
    <property type="interactions" value="98"/>
</dbReference>
<dbReference type="STRING" id="243274.TM_1129"/>
<dbReference type="PaxDb" id="243274-THEMA_08700"/>
<dbReference type="DNASU" id="898635"/>
<dbReference type="EnsemblBacteria" id="AAD36205">
    <property type="protein sequence ID" value="AAD36205"/>
    <property type="gene ID" value="TM_1129"/>
</dbReference>
<dbReference type="KEGG" id="tma:TM1129"/>
<dbReference type="KEGG" id="tmi:THEMA_08700"/>
<dbReference type="KEGG" id="tmm:Tmari_1135"/>
<dbReference type="KEGG" id="tmw:THMA_1152"/>
<dbReference type="eggNOG" id="COG0775">
    <property type="taxonomic scope" value="Bacteria"/>
</dbReference>
<dbReference type="InParanoid" id="Q9X0L3"/>
<dbReference type="OrthoDB" id="44283at2"/>
<dbReference type="UniPathway" id="UPA00904">
    <property type="reaction ID" value="UER00871"/>
</dbReference>
<dbReference type="Proteomes" id="UP000008183">
    <property type="component" value="Chromosome"/>
</dbReference>
<dbReference type="GO" id="GO:0005829">
    <property type="term" value="C:cytosol"/>
    <property type="evidence" value="ECO:0000318"/>
    <property type="project" value="GO_Central"/>
</dbReference>
<dbReference type="GO" id="GO:0008782">
    <property type="term" value="F:adenosylhomocysteine nucleosidase activity"/>
    <property type="evidence" value="ECO:0000318"/>
    <property type="project" value="GO_Central"/>
</dbReference>
<dbReference type="GO" id="GO:0008930">
    <property type="term" value="F:methylthioadenosine nucleosidase activity"/>
    <property type="evidence" value="ECO:0000318"/>
    <property type="project" value="GO_Central"/>
</dbReference>
<dbReference type="GO" id="GO:0019509">
    <property type="term" value="P:L-methionine salvage from methylthioadenosine"/>
    <property type="evidence" value="ECO:0007669"/>
    <property type="project" value="UniProtKB-UniPathway"/>
</dbReference>
<dbReference type="GO" id="GO:0019284">
    <property type="term" value="P:L-methionine salvage from S-adenosylmethionine"/>
    <property type="evidence" value="ECO:0000318"/>
    <property type="project" value="GO_Central"/>
</dbReference>
<dbReference type="GO" id="GO:0009164">
    <property type="term" value="P:nucleoside catabolic process"/>
    <property type="evidence" value="ECO:0007669"/>
    <property type="project" value="InterPro"/>
</dbReference>
<dbReference type="CDD" id="cd09008">
    <property type="entry name" value="MTAN"/>
    <property type="match status" value="1"/>
</dbReference>
<dbReference type="Gene3D" id="3.40.50.1580">
    <property type="entry name" value="Nucleoside phosphorylase domain"/>
    <property type="match status" value="1"/>
</dbReference>
<dbReference type="InterPro" id="IPR010049">
    <property type="entry name" value="MTA_SAH_Nsdase"/>
</dbReference>
<dbReference type="InterPro" id="IPR000845">
    <property type="entry name" value="Nucleoside_phosphorylase_d"/>
</dbReference>
<dbReference type="InterPro" id="IPR035994">
    <property type="entry name" value="Nucleoside_phosphorylase_sf"/>
</dbReference>
<dbReference type="NCBIfam" id="TIGR01704">
    <property type="entry name" value="MTA_SAH-Nsdase"/>
    <property type="match status" value="1"/>
</dbReference>
<dbReference type="PANTHER" id="PTHR46832">
    <property type="entry name" value="5'-METHYLTHIOADENOSINE/S-ADENOSYLHOMOCYSTEINE NUCLEOSIDASE"/>
    <property type="match status" value="1"/>
</dbReference>
<dbReference type="PANTHER" id="PTHR46832:SF1">
    <property type="entry name" value="5'-METHYLTHIOADENOSINE_S-ADENOSYLHOMOCYSTEINE NUCLEOSIDASE"/>
    <property type="match status" value="1"/>
</dbReference>
<dbReference type="Pfam" id="PF01048">
    <property type="entry name" value="PNP_UDP_1"/>
    <property type="match status" value="1"/>
</dbReference>
<dbReference type="SUPFAM" id="SSF53167">
    <property type="entry name" value="Purine and uridine phosphorylases"/>
    <property type="match status" value="1"/>
</dbReference>
<gene>
    <name type="primary">mtnN</name>
    <name type="synonym">mtn</name>
    <name type="ordered locus">TM_1129</name>
</gene>
<protein>
    <recommendedName>
        <fullName evidence="1">5'-methylthioadenosine/S-adenosylhomocysteine nucleosidase</fullName>
        <shortName evidence="1">MTA/SAH nucleosidase</shortName>
        <shortName evidence="1">MTAN</shortName>
        <ecNumber evidence="1">3.2.2.9</ecNumber>
    </recommendedName>
    <alternativeName>
        <fullName evidence="1">5'-deoxyadenosine nucleosidase</fullName>
        <shortName evidence="1">DOA nucleosidase</shortName>
        <shortName evidence="1">dAdo nucleosidase</shortName>
    </alternativeName>
    <alternativeName>
        <fullName evidence="1">5'-methylthioadenosine nucleosidase</fullName>
        <shortName evidence="1">MTA nucleosidase</shortName>
    </alternativeName>
    <alternativeName>
        <fullName evidence="1">S-adenosylhomocysteine nucleosidase</fullName>
        <shortName evidence="1">AdoHcy nucleosidase</shortName>
        <shortName evidence="1">SAH nucleosidase</shortName>
        <shortName evidence="1">SRH nucleosidase</shortName>
    </alternativeName>
</protein>
<name>MTNN_THEMA</name>
<evidence type="ECO:0000250" key="1">
    <source>
        <dbReference type="UniProtKB" id="P0AF12"/>
    </source>
</evidence>
<evidence type="ECO:0000305" key="2"/>